<protein>
    <recommendedName>
        <fullName evidence="1">Na(+)-translocating NADH-quinone reductase subunit D</fullName>
        <shortName evidence="1">Na(+)-NQR subunit D</shortName>
        <shortName evidence="1">Na(+)-translocating NQR subunit D</shortName>
        <ecNumber evidence="1">7.2.1.1</ecNumber>
    </recommendedName>
    <alternativeName>
        <fullName evidence="1">NQR complex subunit D</fullName>
    </alternativeName>
    <alternativeName>
        <fullName evidence="1">NQR-1 subunit D</fullName>
    </alternativeName>
</protein>
<organism>
    <name type="scientific">Haemophilus influenzae (strain PittGG)</name>
    <dbReference type="NCBI Taxonomy" id="374931"/>
    <lineage>
        <taxon>Bacteria</taxon>
        <taxon>Pseudomonadati</taxon>
        <taxon>Pseudomonadota</taxon>
        <taxon>Gammaproteobacteria</taxon>
        <taxon>Pasteurellales</taxon>
        <taxon>Pasteurellaceae</taxon>
        <taxon>Haemophilus</taxon>
    </lineage>
</organism>
<evidence type="ECO:0000255" key="1">
    <source>
        <dbReference type="HAMAP-Rule" id="MF_00428"/>
    </source>
</evidence>
<gene>
    <name evidence="1" type="primary">nqrD</name>
    <name type="ordered locus">CGSHiGG_03440</name>
</gene>
<sequence length="208" mass="22528">MSGKTSYKDLLLAPIAKNNPIALQILGICSALAVTTKLETAFVMAIAVTLVTGLSNLFVSLIRNYIPNSIRIIVQLAIIASLVIVVDQILKAYAYGLSKQLSVFVGLIITNCIVMGRAEAFAMKSPPVESFVDGIGNGLGYGSMLIIVAFFRELIGSGKLFGMTIFETIQNGGWYQANGLFLLAPSAFFIIGFVIWGLRTWKPEQQEK</sequence>
<dbReference type="EC" id="7.2.1.1" evidence="1"/>
<dbReference type="EMBL" id="CP000672">
    <property type="protein sequence ID" value="ABQ99676.1"/>
    <property type="molecule type" value="Genomic_DNA"/>
</dbReference>
<dbReference type="SMR" id="A5UFX1"/>
<dbReference type="KEGG" id="hiq:CGSHiGG_03440"/>
<dbReference type="HOGENOM" id="CLU_046659_1_1_6"/>
<dbReference type="Proteomes" id="UP000001990">
    <property type="component" value="Chromosome"/>
</dbReference>
<dbReference type="GO" id="GO:0005886">
    <property type="term" value="C:plasma membrane"/>
    <property type="evidence" value="ECO:0007669"/>
    <property type="project" value="UniProtKB-SubCell"/>
</dbReference>
<dbReference type="GO" id="GO:0016655">
    <property type="term" value="F:oxidoreductase activity, acting on NAD(P)H, quinone or similar compound as acceptor"/>
    <property type="evidence" value="ECO:0007669"/>
    <property type="project" value="UniProtKB-UniRule"/>
</dbReference>
<dbReference type="GO" id="GO:0006814">
    <property type="term" value="P:sodium ion transport"/>
    <property type="evidence" value="ECO:0007669"/>
    <property type="project" value="UniProtKB-UniRule"/>
</dbReference>
<dbReference type="HAMAP" id="MF_00428">
    <property type="entry name" value="NqrD"/>
    <property type="match status" value="1"/>
</dbReference>
<dbReference type="InterPro" id="IPR011292">
    <property type="entry name" value="NqrD"/>
</dbReference>
<dbReference type="InterPro" id="IPR003667">
    <property type="entry name" value="NqrDE/RnfAE"/>
</dbReference>
<dbReference type="NCBIfam" id="TIGR01939">
    <property type="entry name" value="nqrD"/>
    <property type="match status" value="1"/>
</dbReference>
<dbReference type="NCBIfam" id="NF006777">
    <property type="entry name" value="PRK09292.1"/>
    <property type="match status" value="1"/>
</dbReference>
<dbReference type="NCBIfam" id="NF009070">
    <property type="entry name" value="PRK12405.1"/>
    <property type="match status" value="1"/>
</dbReference>
<dbReference type="PANTHER" id="PTHR30586">
    <property type="entry name" value="ELECTRON TRANSPORT COMPLEX PROTEIN RNFE"/>
    <property type="match status" value="1"/>
</dbReference>
<dbReference type="PANTHER" id="PTHR30586:SF1">
    <property type="entry name" value="NA(+)-TRANSLOCATING NADH-QUINONE REDUCTASE SUBUNIT D"/>
    <property type="match status" value="1"/>
</dbReference>
<dbReference type="Pfam" id="PF02508">
    <property type="entry name" value="Rnf-Nqr"/>
    <property type="match status" value="1"/>
</dbReference>
<dbReference type="PIRSF" id="PIRSF006102">
    <property type="entry name" value="NQR_DE"/>
    <property type="match status" value="1"/>
</dbReference>
<accession>A5UFX1</accession>
<proteinExistence type="inferred from homology"/>
<comment type="function">
    <text evidence="1">NQR complex catalyzes the reduction of ubiquinone-1 to ubiquinol by two successive reactions, coupled with the transport of Na(+) ions from the cytoplasm to the periplasm. NqrA to NqrE are probably involved in the second step, the conversion of ubisemiquinone to ubiquinol.</text>
</comment>
<comment type="catalytic activity">
    <reaction evidence="1">
        <text>a ubiquinone + n Na(+)(in) + NADH + H(+) = a ubiquinol + n Na(+)(out) + NAD(+)</text>
        <dbReference type="Rhea" id="RHEA:47748"/>
        <dbReference type="Rhea" id="RHEA-COMP:9565"/>
        <dbReference type="Rhea" id="RHEA-COMP:9566"/>
        <dbReference type="ChEBI" id="CHEBI:15378"/>
        <dbReference type="ChEBI" id="CHEBI:16389"/>
        <dbReference type="ChEBI" id="CHEBI:17976"/>
        <dbReference type="ChEBI" id="CHEBI:29101"/>
        <dbReference type="ChEBI" id="CHEBI:57540"/>
        <dbReference type="ChEBI" id="CHEBI:57945"/>
        <dbReference type="EC" id="7.2.1.1"/>
    </reaction>
</comment>
<comment type="subunit">
    <text evidence="1">Composed of six subunits; NqrA, NqrB, NqrC, NqrD, NqrE and NqrF.</text>
</comment>
<comment type="subcellular location">
    <subcellularLocation>
        <location evidence="1">Cell inner membrane</location>
        <topology evidence="1">Multi-pass membrane protein</topology>
    </subcellularLocation>
</comment>
<comment type="similarity">
    <text evidence="1">Belongs to the NqrDE/RnfAE family.</text>
</comment>
<name>NQRD_HAEIG</name>
<feature type="chain" id="PRO_1000060154" description="Na(+)-translocating NADH-quinone reductase subunit D">
    <location>
        <begin position="1"/>
        <end position="208"/>
    </location>
</feature>
<feature type="transmembrane region" description="Helical" evidence="1">
    <location>
        <begin position="42"/>
        <end position="62"/>
    </location>
</feature>
<feature type="transmembrane region" description="Helical" evidence="1">
    <location>
        <begin position="72"/>
        <end position="92"/>
    </location>
</feature>
<feature type="transmembrane region" description="Helical" evidence="1">
    <location>
        <begin position="103"/>
        <end position="123"/>
    </location>
</feature>
<feature type="transmembrane region" description="Helical" evidence="1">
    <location>
        <begin position="131"/>
        <end position="151"/>
    </location>
</feature>
<feature type="transmembrane region" description="Helical" evidence="1">
    <location>
        <begin position="178"/>
        <end position="198"/>
    </location>
</feature>
<keyword id="KW-0997">Cell inner membrane</keyword>
<keyword id="KW-1003">Cell membrane</keyword>
<keyword id="KW-0406">Ion transport</keyword>
<keyword id="KW-0472">Membrane</keyword>
<keyword id="KW-0520">NAD</keyword>
<keyword id="KW-0915">Sodium</keyword>
<keyword id="KW-0739">Sodium transport</keyword>
<keyword id="KW-1278">Translocase</keyword>
<keyword id="KW-0812">Transmembrane</keyword>
<keyword id="KW-1133">Transmembrane helix</keyword>
<keyword id="KW-0813">Transport</keyword>
<keyword id="KW-0830">Ubiquinone</keyword>
<reference key="1">
    <citation type="journal article" date="2007" name="Genome Biol.">
        <title>Characterization and modeling of the Haemophilus influenzae core and supragenomes based on the complete genomic sequences of Rd and 12 clinical nontypeable strains.</title>
        <authorList>
            <person name="Hogg J.S."/>
            <person name="Hu F.Z."/>
            <person name="Janto B."/>
            <person name="Boissy R."/>
            <person name="Hayes J."/>
            <person name="Keefe R."/>
            <person name="Post J.C."/>
            <person name="Ehrlich G.D."/>
        </authorList>
    </citation>
    <scope>NUCLEOTIDE SEQUENCE [LARGE SCALE GENOMIC DNA]</scope>
    <source>
        <strain>PittGG</strain>
    </source>
</reference>